<accession>Q2SUU5</accession>
<dbReference type="EMBL" id="CP000086">
    <property type="protein sequence ID" value="ABC39340.1"/>
    <property type="status" value="ALT_INIT"/>
    <property type="molecule type" value="Genomic_DNA"/>
</dbReference>
<dbReference type="RefSeq" id="WP_011402490.1">
    <property type="nucleotide sequence ID" value="NC_007651.1"/>
</dbReference>
<dbReference type="SMR" id="Q2SUU5"/>
<dbReference type="GeneID" id="45122489"/>
<dbReference type="KEGG" id="bte:BTH_I2792"/>
<dbReference type="HOGENOM" id="CLU_117653_2_0_4"/>
<dbReference type="Proteomes" id="UP000001930">
    <property type="component" value="Chromosome I"/>
</dbReference>
<dbReference type="GO" id="GO:0005886">
    <property type="term" value="C:plasma membrane"/>
    <property type="evidence" value="ECO:0007669"/>
    <property type="project" value="UniProtKB-SubCell"/>
</dbReference>
<dbReference type="HAMAP" id="MF_00010">
    <property type="entry name" value="UPF0060"/>
    <property type="match status" value="1"/>
</dbReference>
<dbReference type="InterPro" id="IPR003844">
    <property type="entry name" value="UPF0060"/>
</dbReference>
<dbReference type="NCBIfam" id="NF002586">
    <property type="entry name" value="PRK02237.1"/>
    <property type="match status" value="1"/>
</dbReference>
<dbReference type="PANTHER" id="PTHR36116">
    <property type="entry name" value="UPF0060 MEMBRANE PROTEIN YNFA"/>
    <property type="match status" value="1"/>
</dbReference>
<dbReference type="PANTHER" id="PTHR36116:SF1">
    <property type="entry name" value="UPF0060 MEMBRANE PROTEIN YNFA"/>
    <property type="match status" value="1"/>
</dbReference>
<dbReference type="Pfam" id="PF02694">
    <property type="entry name" value="UPF0060"/>
    <property type="match status" value="1"/>
</dbReference>
<dbReference type="SUPFAM" id="SSF103481">
    <property type="entry name" value="Multidrug resistance efflux transporter EmrE"/>
    <property type="match status" value="1"/>
</dbReference>
<comment type="subcellular location">
    <subcellularLocation>
        <location evidence="1">Cell inner membrane</location>
        <topology evidence="1">Multi-pass membrane protein</topology>
    </subcellularLocation>
</comment>
<comment type="similarity">
    <text evidence="1">Belongs to the UPF0060 family.</text>
</comment>
<comment type="sequence caution" evidence="2">
    <conflict type="erroneous initiation">
        <sequence resource="EMBL-CDS" id="ABC39340"/>
    </conflict>
</comment>
<gene>
    <name type="ordered locus">BTH_I2792</name>
</gene>
<reference key="1">
    <citation type="journal article" date="2005" name="BMC Genomics">
        <title>Bacterial genome adaptation to niches: divergence of the potential virulence genes in three Burkholderia species of different survival strategies.</title>
        <authorList>
            <person name="Kim H.S."/>
            <person name="Schell M.A."/>
            <person name="Yu Y."/>
            <person name="Ulrich R.L."/>
            <person name="Sarria S.H."/>
            <person name="Nierman W.C."/>
            <person name="DeShazer D."/>
        </authorList>
    </citation>
    <scope>NUCLEOTIDE SEQUENCE [LARGE SCALE GENOMIC DNA]</scope>
    <source>
        <strain>ATCC 700388 / DSM 13276 / CCUG 48851 / CIP 106301 / E264</strain>
    </source>
</reference>
<proteinExistence type="inferred from homology"/>
<name>Y2792_BURTA</name>
<keyword id="KW-0997">Cell inner membrane</keyword>
<keyword id="KW-1003">Cell membrane</keyword>
<keyword id="KW-0472">Membrane</keyword>
<keyword id="KW-0812">Transmembrane</keyword>
<keyword id="KW-1133">Transmembrane helix</keyword>
<organism>
    <name type="scientific">Burkholderia thailandensis (strain ATCC 700388 / DSM 13276 / CCUG 48851 / CIP 106301 / E264)</name>
    <dbReference type="NCBI Taxonomy" id="271848"/>
    <lineage>
        <taxon>Bacteria</taxon>
        <taxon>Pseudomonadati</taxon>
        <taxon>Pseudomonadota</taxon>
        <taxon>Betaproteobacteria</taxon>
        <taxon>Burkholderiales</taxon>
        <taxon>Burkholderiaceae</taxon>
        <taxon>Burkholderia</taxon>
        <taxon>pseudomallei group</taxon>
    </lineage>
</organism>
<sequence length="110" mass="11439">MLSLAKIAALFVLTAVAEIVGCYLPWLVLKAGKPVWLLAPAALSLALFAWLLTLHPAAAARTYAAYGGVYIAVALAWLRIVDGVPLSRWDAAGAALALAGMSVIALQPRG</sequence>
<protein>
    <recommendedName>
        <fullName evidence="1">UPF0060 membrane protein BTH_I2792</fullName>
    </recommendedName>
</protein>
<evidence type="ECO:0000255" key="1">
    <source>
        <dbReference type="HAMAP-Rule" id="MF_00010"/>
    </source>
</evidence>
<evidence type="ECO:0000305" key="2"/>
<feature type="chain" id="PRO_0000282214" description="UPF0060 membrane protein BTH_I2792">
    <location>
        <begin position="1"/>
        <end position="110"/>
    </location>
</feature>
<feature type="transmembrane region" description="Helical" evidence="1">
    <location>
        <begin position="9"/>
        <end position="29"/>
    </location>
</feature>
<feature type="transmembrane region" description="Helical" evidence="1">
    <location>
        <begin position="34"/>
        <end position="54"/>
    </location>
</feature>
<feature type="transmembrane region" description="Helical" evidence="1">
    <location>
        <begin position="64"/>
        <end position="84"/>
    </location>
</feature>
<feature type="transmembrane region" description="Helical" evidence="1">
    <location>
        <begin position="86"/>
        <end position="106"/>
    </location>
</feature>